<evidence type="ECO:0000250" key="1">
    <source>
        <dbReference type="UniProtKB" id="P56757"/>
    </source>
</evidence>
<evidence type="ECO:0000255" key="2">
    <source>
        <dbReference type="HAMAP-Rule" id="MF_01346"/>
    </source>
</evidence>
<protein>
    <recommendedName>
        <fullName evidence="2">ATP synthase subunit alpha, chloroplastic</fullName>
        <ecNumber evidence="2">7.1.2.2</ecNumber>
    </recommendedName>
    <alternativeName>
        <fullName evidence="2">ATP synthase F1 sector subunit alpha</fullName>
    </alternativeName>
    <alternativeName>
        <fullName evidence="2">F-ATPase subunit alpha</fullName>
    </alternativeName>
</protein>
<accession>A4QJI4</accession>
<feature type="chain" id="PRO_0000339068" description="ATP synthase subunit alpha, chloroplastic">
    <location>
        <begin position="1"/>
        <end position="507"/>
    </location>
</feature>
<feature type="binding site" evidence="2">
    <location>
        <begin position="170"/>
        <end position="177"/>
    </location>
    <ligand>
        <name>ATP</name>
        <dbReference type="ChEBI" id="CHEBI:30616"/>
    </ligand>
</feature>
<feature type="site" description="Required for activity" evidence="2">
    <location>
        <position position="363"/>
    </location>
</feature>
<feature type="modified residue" description="Phosphothreonine" evidence="1">
    <location>
        <position position="257"/>
    </location>
</feature>
<organism>
    <name type="scientific">Aethionema grandiflorum</name>
    <name type="common">Persian stone-cress</name>
    <dbReference type="NCBI Taxonomy" id="72657"/>
    <lineage>
        <taxon>Eukaryota</taxon>
        <taxon>Viridiplantae</taxon>
        <taxon>Streptophyta</taxon>
        <taxon>Embryophyta</taxon>
        <taxon>Tracheophyta</taxon>
        <taxon>Spermatophyta</taxon>
        <taxon>Magnoliopsida</taxon>
        <taxon>eudicotyledons</taxon>
        <taxon>Gunneridae</taxon>
        <taxon>Pentapetalae</taxon>
        <taxon>rosids</taxon>
        <taxon>malvids</taxon>
        <taxon>Brassicales</taxon>
        <taxon>Brassicaceae</taxon>
        <taxon>Aethionemeae</taxon>
        <taxon>Aethionema</taxon>
    </lineage>
</organism>
<keyword id="KW-0066">ATP synthesis</keyword>
<keyword id="KW-0067">ATP-binding</keyword>
<keyword id="KW-0139">CF(1)</keyword>
<keyword id="KW-0150">Chloroplast</keyword>
<keyword id="KW-0375">Hydrogen ion transport</keyword>
<keyword id="KW-0406">Ion transport</keyword>
<keyword id="KW-0472">Membrane</keyword>
<keyword id="KW-0547">Nucleotide-binding</keyword>
<keyword id="KW-0597">Phosphoprotein</keyword>
<keyword id="KW-0934">Plastid</keyword>
<keyword id="KW-0793">Thylakoid</keyword>
<keyword id="KW-1278">Translocase</keyword>
<keyword id="KW-0813">Transport</keyword>
<geneLocation type="chloroplast"/>
<comment type="function">
    <text evidence="2">Produces ATP from ADP in the presence of a proton gradient across the membrane. The alpha chain is a regulatory subunit.</text>
</comment>
<comment type="catalytic activity">
    <reaction evidence="2">
        <text>ATP + H2O + 4 H(+)(in) = ADP + phosphate + 5 H(+)(out)</text>
        <dbReference type="Rhea" id="RHEA:57720"/>
        <dbReference type="ChEBI" id="CHEBI:15377"/>
        <dbReference type="ChEBI" id="CHEBI:15378"/>
        <dbReference type="ChEBI" id="CHEBI:30616"/>
        <dbReference type="ChEBI" id="CHEBI:43474"/>
        <dbReference type="ChEBI" id="CHEBI:456216"/>
        <dbReference type="EC" id="7.1.2.2"/>
    </reaction>
</comment>
<comment type="subunit">
    <text evidence="2">F-type ATPases have 2 components, CF(1) - the catalytic core - and CF(0) - the membrane proton channel. CF(1) has five subunits: alpha(3), beta(3), gamma(1), delta(1), epsilon(1). CF(0) has four main subunits: a, b, b' and c.</text>
</comment>
<comment type="subcellular location">
    <subcellularLocation>
        <location evidence="2">Plastid</location>
        <location evidence="2">Chloroplast thylakoid membrane</location>
        <topology evidence="2">Peripheral membrane protein</topology>
    </subcellularLocation>
</comment>
<comment type="similarity">
    <text evidence="2">Belongs to the ATPase alpha/beta chains family.</text>
</comment>
<gene>
    <name evidence="2" type="primary">atpA</name>
</gene>
<dbReference type="EC" id="7.1.2.2" evidence="2"/>
<dbReference type="EMBL" id="AP009367">
    <property type="protein sequence ID" value="BAF49839.1"/>
    <property type="molecule type" value="Genomic_DNA"/>
</dbReference>
<dbReference type="RefSeq" id="YP_001123015.1">
    <property type="nucleotide sequence ID" value="NC_009266.1"/>
</dbReference>
<dbReference type="SMR" id="A4QJI4"/>
<dbReference type="GeneID" id="4962224"/>
<dbReference type="GO" id="GO:0009535">
    <property type="term" value="C:chloroplast thylakoid membrane"/>
    <property type="evidence" value="ECO:0007669"/>
    <property type="project" value="UniProtKB-SubCell"/>
</dbReference>
<dbReference type="GO" id="GO:0045259">
    <property type="term" value="C:proton-transporting ATP synthase complex"/>
    <property type="evidence" value="ECO:0007669"/>
    <property type="project" value="UniProtKB-KW"/>
</dbReference>
<dbReference type="GO" id="GO:0043531">
    <property type="term" value="F:ADP binding"/>
    <property type="evidence" value="ECO:0007669"/>
    <property type="project" value="TreeGrafter"/>
</dbReference>
<dbReference type="GO" id="GO:0005524">
    <property type="term" value="F:ATP binding"/>
    <property type="evidence" value="ECO:0007669"/>
    <property type="project" value="UniProtKB-UniRule"/>
</dbReference>
<dbReference type="GO" id="GO:0046933">
    <property type="term" value="F:proton-transporting ATP synthase activity, rotational mechanism"/>
    <property type="evidence" value="ECO:0007669"/>
    <property type="project" value="UniProtKB-UniRule"/>
</dbReference>
<dbReference type="CDD" id="cd18113">
    <property type="entry name" value="ATP-synt_F1_alpha_C"/>
    <property type="match status" value="1"/>
</dbReference>
<dbReference type="CDD" id="cd18116">
    <property type="entry name" value="ATP-synt_F1_alpha_N"/>
    <property type="match status" value="1"/>
</dbReference>
<dbReference type="CDD" id="cd01132">
    <property type="entry name" value="F1-ATPase_alpha_CD"/>
    <property type="match status" value="1"/>
</dbReference>
<dbReference type="FunFam" id="1.20.150.20:FF:000001">
    <property type="entry name" value="ATP synthase subunit alpha"/>
    <property type="match status" value="1"/>
</dbReference>
<dbReference type="FunFam" id="2.40.30.20:FF:000001">
    <property type="entry name" value="ATP synthase subunit alpha"/>
    <property type="match status" value="1"/>
</dbReference>
<dbReference type="FunFam" id="3.40.50.300:FF:000002">
    <property type="entry name" value="ATP synthase subunit alpha"/>
    <property type="match status" value="1"/>
</dbReference>
<dbReference type="Gene3D" id="2.40.30.20">
    <property type="match status" value="1"/>
</dbReference>
<dbReference type="Gene3D" id="1.20.150.20">
    <property type="entry name" value="ATP synthase alpha/beta chain, C-terminal domain"/>
    <property type="match status" value="1"/>
</dbReference>
<dbReference type="Gene3D" id="3.40.50.300">
    <property type="entry name" value="P-loop containing nucleotide triphosphate hydrolases"/>
    <property type="match status" value="1"/>
</dbReference>
<dbReference type="HAMAP" id="MF_01346">
    <property type="entry name" value="ATP_synth_alpha_bact"/>
    <property type="match status" value="1"/>
</dbReference>
<dbReference type="InterPro" id="IPR023366">
    <property type="entry name" value="ATP_synth_asu-like_sf"/>
</dbReference>
<dbReference type="InterPro" id="IPR000793">
    <property type="entry name" value="ATP_synth_asu_C"/>
</dbReference>
<dbReference type="InterPro" id="IPR038376">
    <property type="entry name" value="ATP_synth_asu_C_sf"/>
</dbReference>
<dbReference type="InterPro" id="IPR033732">
    <property type="entry name" value="ATP_synth_F1_a_nt-bd_dom"/>
</dbReference>
<dbReference type="InterPro" id="IPR005294">
    <property type="entry name" value="ATP_synth_F1_asu"/>
</dbReference>
<dbReference type="InterPro" id="IPR020003">
    <property type="entry name" value="ATPase_a/bsu_AS"/>
</dbReference>
<dbReference type="InterPro" id="IPR004100">
    <property type="entry name" value="ATPase_F1/V1/A1_a/bsu_N"/>
</dbReference>
<dbReference type="InterPro" id="IPR036121">
    <property type="entry name" value="ATPase_F1/V1/A1_a/bsu_N_sf"/>
</dbReference>
<dbReference type="InterPro" id="IPR000194">
    <property type="entry name" value="ATPase_F1/V1/A1_a/bsu_nucl-bd"/>
</dbReference>
<dbReference type="InterPro" id="IPR027417">
    <property type="entry name" value="P-loop_NTPase"/>
</dbReference>
<dbReference type="NCBIfam" id="TIGR00962">
    <property type="entry name" value="atpA"/>
    <property type="match status" value="1"/>
</dbReference>
<dbReference type="NCBIfam" id="NF009884">
    <property type="entry name" value="PRK13343.1"/>
    <property type="match status" value="1"/>
</dbReference>
<dbReference type="PANTHER" id="PTHR48082">
    <property type="entry name" value="ATP SYNTHASE SUBUNIT ALPHA, MITOCHONDRIAL"/>
    <property type="match status" value="1"/>
</dbReference>
<dbReference type="PANTHER" id="PTHR48082:SF2">
    <property type="entry name" value="ATP SYNTHASE SUBUNIT ALPHA, MITOCHONDRIAL"/>
    <property type="match status" value="1"/>
</dbReference>
<dbReference type="Pfam" id="PF00006">
    <property type="entry name" value="ATP-synt_ab"/>
    <property type="match status" value="1"/>
</dbReference>
<dbReference type="Pfam" id="PF00306">
    <property type="entry name" value="ATP-synt_ab_C"/>
    <property type="match status" value="1"/>
</dbReference>
<dbReference type="Pfam" id="PF02874">
    <property type="entry name" value="ATP-synt_ab_N"/>
    <property type="match status" value="1"/>
</dbReference>
<dbReference type="PIRSF" id="PIRSF039088">
    <property type="entry name" value="F_ATPase_subunit_alpha"/>
    <property type="match status" value="1"/>
</dbReference>
<dbReference type="SUPFAM" id="SSF47917">
    <property type="entry name" value="C-terminal domain of alpha and beta subunits of F1 ATP synthase"/>
    <property type="match status" value="1"/>
</dbReference>
<dbReference type="SUPFAM" id="SSF50615">
    <property type="entry name" value="N-terminal domain of alpha and beta subunits of F1 ATP synthase"/>
    <property type="match status" value="1"/>
</dbReference>
<dbReference type="SUPFAM" id="SSF52540">
    <property type="entry name" value="P-loop containing nucleoside triphosphate hydrolases"/>
    <property type="match status" value="1"/>
</dbReference>
<dbReference type="PROSITE" id="PS00152">
    <property type="entry name" value="ATPASE_ALPHA_BETA"/>
    <property type="match status" value="1"/>
</dbReference>
<reference key="1">
    <citation type="submission" date="2007-03" db="EMBL/GenBank/DDBJ databases">
        <title>Sequencing analysis of Aethionema grandiflorum chloroplast DNA.</title>
        <authorList>
            <person name="Hosouchi T."/>
            <person name="Tsuruoka H."/>
            <person name="Kotani H."/>
        </authorList>
    </citation>
    <scope>NUCLEOTIDE SEQUENCE [LARGE SCALE GENOMIC DNA]</scope>
</reference>
<sequence length="507" mass="55337">MVTLKADEISNIIRERIEQYNREVKIVNTGTVLQVGDGIARIYGLDEVMAGELVEFEEGTIGIALNLESNNVGVVLMGDGLMIQEGSSVKATGKIAQIPVSEAYLGRVINALANPIDGRGKISASESRLIESPAPGIISRRSVYEPLQTGLIAIDSMIPIGRGQRELIIGDRQTGKTAVATDTILNQQGQNVICVYVAIGQKASSVAQVVTSLQERGAMEYTIVVAETADSPATLQYLAPYTGAALAEYFMYREQHTLIIYDDLSKQAQAYRQMSLLLRRPPGREAYPGDVFYLHSRLLERAAKLSSQLGEGSMTALPIVETQSGDVSAYIPTNVISITDGQIFLSADLFNAGIRPAINVGISVSRVGSAAQIKAMKQVAGKLKLELAQFAELEAFAQFSSDLDKATQNQLARGQRLRELLKQSQSAPLTVEEQIMTIYTGTNGYLDGLEIGQVRKFLVQLRTYLKTNKPQFQEIISSTKTLTDEAESVLKEGIQEQLERFLLQEKL</sequence>
<proteinExistence type="inferred from homology"/>
<name>ATPA_AETGR</name>